<gene>
    <name type="primary">aI3</name>
</gene>
<feature type="chain" id="PRO_0000312714" description="Probable intron-encoded endonuclease aI3">
    <location>
        <begin position="1"/>
        <end position="243"/>
    </location>
</feature>
<sequence>MKVEKRKIDTESIKKFWVGLLEGSGSIQVNHWKKKNLQFRLEIKLKNCNENFLMFKDIQKAIGGYIRFETSKKKERDQVVWIVDQKTEIERIIKIFDQYALLTKQKQDQLNFLKENLQRQDVNWYLKERDNKYKVRVAHPDYKIKDITYFNEWLSGFVEAEGCFCIRTSTYHSFSISQKYEKVLLSQIKEFFNITTQIKESKKNIFLLEVYKKVILQKLIHHFIEYPLLGEKNKSFERFKNFF</sequence>
<proteinExistence type="inferred from homology"/>
<keyword id="KW-0255">Endonuclease</keyword>
<keyword id="KW-0378">Hydrolase</keyword>
<keyword id="KW-0404">Intron homing</keyword>
<keyword id="KW-0496">Mitochondrion</keyword>
<keyword id="KW-0540">Nuclease</keyword>
<name>AI3_DICCI</name>
<organism>
    <name type="scientific">Dictyostelium citrinum</name>
    <name type="common">Slime mold</name>
    <dbReference type="NCBI Taxonomy" id="361072"/>
    <lineage>
        <taxon>Eukaryota</taxon>
        <taxon>Amoebozoa</taxon>
        <taxon>Evosea</taxon>
        <taxon>Eumycetozoa</taxon>
        <taxon>Dictyostelia</taxon>
        <taxon>Dictyosteliales</taxon>
        <taxon>Dictyosteliaceae</taxon>
        <taxon>Dictyostelium</taxon>
    </lineage>
</organism>
<evidence type="ECO:0000250" key="1"/>
<evidence type="ECO:0000305" key="2"/>
<geneLocation type="mitochondrion"/>
<accession>Q2LCQ5</accession>
<dbReference type="EC" id="3.1.-.-"/>
<dbReference type="EMBL" id="DQ336395">
    <property type="protein sequence ID" value="ABC60388.1"/>
    <property type="molecule type" value="Genomic_DNA"/>
</dbReference>
<dbReference type="RefSeq" id="YP_492637.1">
    <property type="nucleotide sequence ID" value="NC_007787.2"/>
</dbReference>
<dbReference type="SMR" id="Q2LCQ5"/>
<dbReference type="GO" id="GO:0005739">
    <property type="term" value="C:mitochondrion"/>
    <property type="evidence" value="ECO:0007669"/>
    <property type="project" value="UniProtKB-SubCell"/>
</dbReference>
<dbReference type="GO" id="GO:0004519">
    <property type="term" value="F:endonuclease activity"/>
    <property type="evidence" value="ECO:0007669"/>
    <property type="project" value="UniProtKB-KW"/>
</dbReference>
<dbReference type="GO" id="GO:0006314">
    <property type="term" value="P:intron homing"/>
    <property type="evidence" value="ECO:0007669"/>
    <property type="project" value="UniProtKB-KW"/>
</dbReference>
<dbReference type="Gene3D" id="3.10.28.10">
    <property type="entry name" value="Homing endonucleases"/>
    <property type="match status" value="2"/>
</dbReference>
<dbReference type="InterPro" id="IPR027434">
    <property type="entry name" value="Homing_endonucl"/>
</dbReference>
<dbReference type="InterPro" id="IPR004860">
    <property type="entry name" value="LAGLIDADG_dom"/>
</dbReference>
<dbReference type="InterPro" id="IPR051289">
    <property type="entry name" value="LAGLIDADG_Endonuclease"/>
</dbReference>
<dbReference type="PANTHER" id="PTHR36181">
    <property type="entry name" value="INTRON-ENCODED ENDONUCLEASE AI3-RELATED"/>
    <property type="match status" value="1"/>
</dbReference>
<dbReference type="PANTHER" id="PTHR36181:SF2">
    <property type="entry name" value="INTRON-ENCODED ENDONUCLEASE AI3-RELATED"/>
    <property type="match status" value="1"/>
</dbReference>
<dbReference type="Pfam" id="PF00961">
    <property type="entry name" value="LAGLIDADG_1"/>
    <property type="match status" value="2"/>
</dbReference>
<dbReference type="SUPFAM" id="SSF55608">
    <property type="entry name" value="Homing endonucleases"/>
    <property type="match status" value="2"/>
</dbReference>
<comment type="function">
    <text evidence="1">Mitochondrial DNA endonuclease involved in intron homing.</text>
</comment>
<comment type="subcellular location">
    <subcellularLocation>
        <location evidence="1">Mitochondrion</location>
    </subcellularLocation>
</comment>
<comment type="similarity">
    <text evidence="2">Belongs to the LAGLIDADG endonuclease family.</text>
</comment>
<reference key="1">
    <citation type="journal article" date="2008" name="Mol. Biol. Evol.">
        <title>Mitochondrial genome evolution in the social amoebae.</title>
        <authorList>
            <person name="Heidel A.J."/>
            <person name="Gloeckner G."/>
        </authorList>
    </citation>
    <scope>NUCLEOTIDE SEQUENCE [LARGE SCALE GENOMIC DNA]</scope>
</reference>
<protein>
    <recommendedName>
        <fullName>Probable intron-encoded endonuclease aI3</fullName>
        <ecNumber>3.1.-.-</ecNumber>
    </recommendedName>
    <alternativeName>
        <fullName>Cox1/2 intron3 ORF</fullName>
    </alternativeName>
</protein>